<name>DXR_CORDI</name>
<reference key="1">
    <citation type="journal article" date="2003" name="Nucleic Acids Res.">
        <title>The complete genome sequence and analysis of Corynebacterium diphtheriae NCTC13129.</title>
        <authorList>
            <person name="Cerdeno-Tarraga A.-M."/>
            <person name="Efstratiou A."/>
            <person name="Dover L.G."/>
            <person name="Holden M.T.G."/>
            <person name="Pallen M.J."/>
            <person name="Bentley S.D."/>
            <person name="Besra G.S."/>
            <person name="Churcher C.M."/>
            <person name="James K.D."/>
            <person name="De Zoysa A."/>
            <person name="Chillingworth T."/>
            <person name="Cronin A."/>
            <person name="Dowd L."/>
            <person name="Feltwell T."/>
            <person name="Hamlin N."/>
            <person name="Holroyd S."/>
            <person name="Jagels K."/>
            <person name="Moule S."/>
            <person name="Quail M.A."/>
            <person name="Rabbinowitsch E."/>
            <person name="Rutherford K.M."/>
            <person name="Thomson N.R."/>
            <person name="Unwin L."/>
            <person name="Whitehead S."/>
            <person name="Barrell B.G."/>
            <person name="Parkhill J."/>
        </authorList>
    </citation>
    <scope>NUCLEOTIDE SEQUENCE [LARGE SCALE GENOMIC DNA]</scope>
    <source>
        <strain>ATCC 700971 / NCTC 13129 / Biotype gravis</strain>
    </source>
</reference>
<gene>
    <name evidence="1" type="primary">dxr</name>
    <name type="ordered locus">DIP1500</name>
</gene>
<organism>
    <name type="scientific">Corynebacterium diphtheriae (strain ATCC 700971 / NCTC 13129 / Biotype gravis)</name>
    <dbReference type="NCBI Taxonomy" id="257309"/>
    <lineage>
        <taxon>Bacteria</taxon>
        <taxon>Bacillati</taxon>
        <taxon>Actinomycetota</taxon>
        <taxon>Actinomycetes</taxon>
        <taxon>Mycobacteriales</taxon>
        <taxon>Corynebacteriaceae</taxon>
        <taxon>Corynebacterium</taxon>
    </lineage>
</organism>
<dbReference type="EC" id="1.1.1.267" evidence="1"/>
<dbReference type="EMBL" id="BX248358">
    <property type="protein sequence ID" value="CAE50027.1"/>
    <property type="molecule type" value="Genomic_DNA"/>
</dbReference>
<dbReference type="RefSeq" id="WP_010935107.1">
    <property type="nucleotide sequence ID" value="NC_002935.2"/>
</dbReference>
<dbReference type="SMR" id="Q6NGL1"/>
<dbReference type="STRING" id="257309.DIP1500"/>
<dbReference type="KEGG" id="cdi:DIP1500"/>
<dbReference type="HOGENOM" id="CLU_035714_4_0_11"/>
<dbReference type="UniPathway" id="UPA00056">
    <property type="reaction ID" value="UER00092"/>
</dbReference>
<dbReference type="Proteomes" id="UP000002198">
    <property type="component" value="Chromosome"/>
</dbReference>
<dbReference type="GO" id="GO:0030604">
    <property type="term" value="F:1-deoxy-D-xylulose-5-phosphate reductoisomerase activity"/>
    <property type="evidence" value="ECO:0007669"/>
    <property type="project" value="UniProtKB-UniRule"/>
</dbReference>
<dbReference type="GO" id="GO:0030145">
    <property type="term" value="F:manganese ion binding"/>
    <property type="evidence" value="ECO:0007669"/>
    <property type="project" value="TreeGrafter"/>
</dbReference>
<dbReference type="GO" id="GO:0070402">
    <property type="term" value="F:NADPH binding"/>
    <property type="evidence" value="ECO:0007669"/>
    <property type="project" value="InterPro"/>
</dbReference>
<dbReference type="GO" id="GO:0051484">
    <property type="term" value="P:isopentenyl diphosphate biosynthetic process, methylerythritol 4-phosphate pathway involved in terpenoid biosynthetic process"/>
    <property type="evidence" value="ECO:0007669"/>
    <property type="project" value="TreeGrafter"/>
</dbReference>
<dbReference type="FunFam" id="3.40.50.720:FF:000045">
    <property type="entry name" value="1-deoxy-D-xylulose 5-phosphate reductoisomerase"/>
    <property type="match status" value="1"/>
</dbReference>
<dbReference type="Gene3D" id="1.10.1740.10">
    <property type="match status" value="1"/>
</dbReference>
<dbReference type="Gene3D" id="3.40.50.720">
    <property type="entry name" value="NAD(P)-binding Rossmann-like Domain"/>
    <property type="match status" value="1"/>
</dbReference>
<dbReference type="HAMAP" id="MF_00183">
    <property type="entry name" value="DXP_reductoisom"/>
    <property type="match status" value="1"/>
</dbReference>
<dbReference type="InterPro" id="IPR003821">
    <property type="entry name" value="DXP_reductoisomerase"/>
</dbReference>
<dbReference type="InterPro" id="IPR013644">
    <property type="entry name" value="DXP_reductoisomerase_C"/>
</dbReference>
<dbReference type="InterPro" id="IPR013512">
    <property type="entry name" value="DXP_reductoisomerase_N"/>
</dbReference>
<dbReference type="InterPro" id="IPR026877">
    <property type="entry name" value="DXPR_C"/>
</dbReference>
<dbReference type="InterPro" id="IPR036169">
    <property type="entry name" value="DXPR_C_sf"/>
</dbReference>
<dbReference type="InterPro" id="IPR036291">
    <property type="entry name" value="NAD(P)-bd_dom_sf"/>
</dbReference>
<dbReference type="NCBIfam" id="TIGR00243">
    <property type="entry name" value="Dxr"/>
    <property type="match status" value="1"/>
</dbReference>
<dbReference type="PANTHER" id="PTHR30525">
    <property type="entry name" value="1-DEOXY-D-XYLULOSE 5-PHOSPHATE REDUCTOISOMERASE"/>
    <property type="match status" value="1"/>
</dbReference>
<dbReference type="PANTHER" id="PTHR30525:SF0">
    <property type="entry name" value="1-DEOXY-D-XYLULOSE 5-PHOSPHATE REDUCTOISOMERASE, CHLOROPLASTIC"/>
    <property type="match status" value="1"/>
</dbReference>
<dbReference type="Pfam" id="PF08436">
    <property type="entry name" value="DXP_redisom_C"/>
    <property type="match status" value="1"/>
</dbReference>
<dbReference type="Pfam" id="PF02670">
    <property type="entry name" value="DXP_reductoisom"/>
    <property type="match status" value="1"/>
</dbReference>
<dbReference type="Pfam" id="PF13288">
    <property type="entry name" value="DXPR_C"/>
    <property type="match status" value="1"/>
</dbReference>
<dbReference type="PIRSF" id="PIRSF006205">
    <property type="entry name" value="Dxp_reductismrs"/>
    <property type="match status" value="1"/>
</dbReference>
<dbReference type="SUPFAM" id="SSF69055">
    <property type="entry name" value="1-deoxy-D-xylulose-5-phosphate reductoisomerase, C-terminal domain"/>
    <property type="match status" value="1"/>
</dbReference>
<dbReference type="SUPFAM" id="SSF55347">
    <property type="entry name" value="Glyceraldehyde-3-phosphate dehydrogenase-like, C-terminal domain"/>
    <property type="match status" value="1"/>
</dbReference>
<dbReference type="SUPFAM" id="SSF51735">
    <property type="entry name" value="NAD(P)-binding Rossmann-fold domains"/>
    <property type="match status" value="1"/>
</dbReference>
<proteinExistence type="inferred from homology"/>
<keyword id="KW-0414">Isoprene biosynthesis</keyword>
<keyword id="KW-0464">Manganese</keyword>
<keyword id="KW-0479">Metal-binding</keyword>
<keyword id="KW-0521">NADP</keyword>
<keyword id="KW-0560">Oxidoreductase</keyword>
<keyword id="KW-1185">Reference proteome</keyword>
<sequence>MRKKILILGSTGSIGTQALEVIASRQDQFEVVGIAAGGRDPQLIIQQAQMLGLAADHVAVANEKSATQVSRALGAAVLSGRDAATDLVESVPADTVLNGLVGSMGLRATLATIQLGEVLALANKESLVAGGTFVTSQAAPGQIVPVDSEHSAMAQCLRSGASAEVSKLVLTASGGPFRGWSREEMWDVTPEQAAAHPTWSMGQMNTLNSATLINKGLELIEATLLFDIPADRIEVTVHPQSIVHSMVTFCDGATIAQASPPSMLLSISHALAWPHRVPEAQPALDFSQASTWDFMPVDNEAFPAVELAREVALKQGTYPAVYNAANEQAAAAFLRGRIKFPQIVDIVGEVVAGSSQFAGVASSVEEIIAHESESRRRADALVDKLSR</sequence>
<protein>
    <recommendedName>
        <fullName evidence="1">1-deoxy-D-xylulose 5-phosphate reductoisomerase</fullName>
        <shortName evidence="1">DXP reductoisomerase</shortName>
        <ecNumber evidence="1">1.1.1.267</ecNumber>
    </recommendedName>
    <alternativeName>
        <fullName evidence="1">1-deoxyxylulose-5-phosphate reductoisomerase</fullName>
    </alternativeName>
    <alternativeName>
        <fullName evidence="1">2-C-methyl-D-erythritol 4-phosphate synthase</fullName>
    </alternativeName>
</protein>
<comment type="function">
    <text evidence="1">Catalyzes the NADPH-dependent rearrangement and reduction of 1-deoxy-D-xylulose-5-phosphate (DXP) to 2-C-methyl-D-erythritol 4-phosphate (MEP).</text>
</comment>
<comment type="catalytic activity">
    <reaction evidence="1">
        <text>2-C-methyl-D-erythritol 4-phosphate + NADP(+) = 1-deoxy-D-xylulose 5-phosphate + NADPH + H(+)</text>
        <dbReference type="Rhea" id="RHEA:13717"/>
        <dbReference type="ChEBI" id="CHEBI:15378"/>
        <dbReference type="ChEBI" id="CHEBI:57783"/>
        <dbReference type="ChEBI" id="CHEBI:57792"/>
        <dbReference type="ChEBI" id="CHEBI:58262"/>
        <dbReference type="ChEBI" id="CHEBI:58349"/>
        <dbReference type="EC" id="1.1.1.267"/>
    </reaction>
    <physiologicalReaction direction="right-to-left" evidence="1">
        <dbReference type="Rhea" id="RHEA:13719"/>
    </physiologicalReaction>
</comment>
<comment type="cofactor">
    <cofactor evidence="1">
        <name>Mg(2+)</name>
        <dbReference type="ChEBI" id="CHEBI:18420"/>
    </cofactor>
    <cofactor evidence="1">
        <name>Mn(2+)</name>
        <dbReference type="ChEBI" id="CHEBI:29035"/>
    </cofactor>
</comment>
<comment type="pathway">
    <text evidence="1">Isoprenoid biosynthesis; isopentenyl diphosphate biosynthesis via DXP pathway; isopentenyl diphosphate from 1-deoxy-D-xylulose 5-phosphate: step 1/6.</text>
</comment>
<comment type="similarity">
    <text evidence="1">Belongs to the DXR family.</text>
</comment>
<accession>Q6NGL1</accession>
<evidence type="ECO:0000255" key="1">
    <source>
        <dbReference type="HAMAP-Rule" id="MF_00183"/>
    </source>
</evidence>
<feature type="chain" id="PRO_0000163640" description="1-deoxy-D-xylulose 5-phosphate reductoisomerase">
    <location>
        <begin position="1"/>
        <end position="387"/>
    </location>
</feature>
<feature type="binding site" evidence="1">
    <location>
        <position position="11"/>
    </location>
    <ligand>
        <name>NADPH</name>
        <dbReference type="ChEBI" id="CHEBI:57783"/>
    </ligand>
</feature>
<feature type="binding site" evidence="1">
    <location>
        <position position="12"/>
    </location>
    <ligand>
        <name>NADPH</name>
        <dbReference type="ChEBI" id="CHEBI:57783"/>
    </ligand>
</feature>
<feature type="binding site" evidence="1">
    <location>
        <position position="13"/>
    </location>
    <ligand>
        <name>NADPH</name>
        <dbReference type="ChEBI" id="CHEBI:57783"/>
    </ligand>
</feature>
<feature type="binding site" evidence="1">
    <location>
        <position position="14"/>
    </location>
    <ligand>
        <name>NADPH</name>
        <dbReference type="ChEBI" id="CHEBI:57783"/>
    </ligand>
</feature>
<feature type="binding site" evidence="1">
    <location>
        <position position="37"/>
    </location>
    <ligand>
        <name>NADPH</name>
        <dbReference type="ChEBI" id="CHEBI:57783"/>
    </ligand>
</feature>
<feature type="binding site" evidence="1">
    <location>
        <position position="39"/>
    </location>
    <ligand>
        <name>NADPH</name>
        <dbReference type="ChEBI" id="CHEBI:57783"/>
    </ligand>
</feature>
<feature type="binding site" evidence="1">
    <location>
        <position position="123"/>
    </location>
    <ligand>
        <name>NADPH</name>
        <dbReference type="ChEBI" id="CHEBI:57783"/>
    </ligand>
</feature>
<feature type="binding site" evidence="1">
    <location>
        <position position="124"/>
    </location>
    <ligand>
        <name>1-deoxy-D-xylulose 5-phosphate</name>
        <dbReference type="ChEBI" id="CHEBI:57792"/>
    </ligand>
</feature>
<feature type="binding site" evidence="1">
    <location>
        <position position="125"/>
    </location>
    <ligand>
        <name>NADPH</name>
        <dbReference type="ChEBI" id="CHEBI:57783"/>
    </ligand>
</feature>
<feature type="binding site" evidence="1">
    <location>
        <position position="147"/>
    </location>
    <ligand>
        <name>Mn(2+)</name>
        <dbReference type="ChEBI" id="CHEBI:29035"/>
    </ligand>
</feature>
<feature type="binding site" evidence="1">
    <location>
        <position position="148"/>
    </location>
    <ligand>
        <name>1-deoxy-D-xylulose 5-phosphate</name>
        <dbReference type="ChEBI" id="CHEBI:57792"/>
    </ligand>
</feature>
<feature type="binding site" evidence="1">
    <location>
        <position position="149"/>
    </location>
    <ligand>
        <name>1-deoxy-D-xylulose 5-phosphate</name>
        <dbReference type="ChEBI" id="CHEBI:57792"/>
    </ligand>
</feature>
<feature type="binding site" evidence="1">
    <location>
        <position position="149"/>
    </location>
    <ligand>
        <name>Mn(2+)</name>
        <dbReference type="ChEBI" id="CHEBI:29035"/>
    </ligand>
</feature>
<feature type="binding site" evidence="1">
    <location>
        <position position="173"/>
    </location>
    <ligand>
        <name>1-deoxy-D-xylulose 5-phosphate</name>
        <dbReference type="ChEBI" id="CHEBI:57792"/>
    </ligand>
</feature>
<feature type="binding site" evidence="1">
    <location>
        <position position="196"/>
    </location>
    <ligand>
        <name>1-deoxy-D-xylulose 5-phosphate</name>
        <dbReference type="ChEBI" id="CHEBI:57792"/>
    </ligand>
</feature>
<feature type="binding site" evidence="1">
    <location>
        <position position="202"/>
    </location>
    <ligand>
        <name>NADPH</name>
        <dbReference type="ChEBI" id="CHEBI:57783"/>
    </ligand>
</feature>
<feature type="binding site" evidence="1">
    <location>
        <position position="209"/>
    </location>
    <ligand>
        <name>1-deoxy-D-xylulose 5-phosphate</name>
        <dbReference type="ChEBI" id="CHEBI:57792"/>
    </ligand>
</feature>
<feature type="binding site" evidence="1">
    <location>
        <position position="214"/>
    </location>
    <ligand>
        <name>1-deoxy-D-xylulose 5-phosphate</name>
        <dbReference type="ChEBI" id="CHEBI:57792"/>
    </ligand>
</feature>
<feature type="binding site" evidence="1">
    <location>
        <position position="215"/>
    </location>
    <ligand>
        <name>1-deoxy-D-xylulose 5-phosphate</name>
        <dbReference type="ChEBI" id="CHEBI:57792"/>
    </ligand>
</feature>
<feature type="binding site" evidence="1">
    <location>
        <position position="218"/>
    </location>
    <ligand>
        <name>1-deoxy-D-xylulose 5-phosphate</name>
        <dbReference type="ChEBI" id="CHEBI:57792"/>
    </ligand>
</feature>
<feature type="binding site" evidence="1">
    <location>
        <position position="218"/>
    </location>
    <ligand>
        <name>Mn(2+)</name>
        <dbReference type="ChEBI" id="CHEBI:29035"/>
    </ligand>
</feature>